<sequence length="39" mass="4424">MTIDRTYPIFTVRWLAVHGLAVPTVSFLGSISAMQFIQR</sequence>
<gene>
    <name evidence="1" type="primary">psbF</name>
</gene>
<comment type="function">
    <text evidence="1">This b-type cytochrome is tightly associated with the reaction center of photosystem II (PSII). PSII is a light-driven water:plastoquinone oxidoreductase that uses light energy to abstract electrons from H(2)O, generating O(2) and a proton gradient subsequently used for ATP formation. It consists of a core antenna complex that captures photons, and an electron transfer chain that converts photonic excitation into a charge separation.</text>
</comment>
<comment type="cofactor">
    <cofactor evidence="1">
        <name>heme b</name>
        <dbReference type="ChEBI" id="CHEBI:60344"/>
    </cofactor>
    <text evidence="1">With its partner (PsbE) binds heme. PSII binds additional chlorophylls, carotenoids and specific lipids.</text>
</comment>
<comment type="subunit">
    <text evidence="1">Heterodimer of an alpha subunit and a beta subunit. PSII is composed of 1 copy each of membrane proteins PsbA, PsbB, PsbC, PsbD, PsbE, PsbF, PsbH, PsbI, PsbJ, PsbK, PsbL, PsbM, PsbT, PsbX, PsbY, PsbZ, Psb30/Ycf12, at least 3 peripheral proteins of the oxygen-evolving complex and a large number of cofactors. It forms dimeric complexes.</text>
</comment>
<comment type="subcellular location">
    <subcellularLocation>
        <location evidence="1">Plastid</location>
        <location evidence="1">Chloroplast thylakoid membrane</location>
        <topology evidence="1">Single-pass membrane protein</topology>
    </subcellularLocation>
</comment>
<comment type="similarity">
    <text evidence="1">Belongs to the PsbE/PsbF family.</text>
</comment>
<name>PSBF_ACOCL</name>
<reference key="1">
    <citation type="journal article" date="2000" name="Am. J. Bot.">
        <title>Utility of 17 chloroplast genes for inferring the phylogeny of the basal angiosperms.</title>
        <authorList>
            <person name="Graham S.W."/>
            <person name="Olmstead R.G."/>
        </authorList>
    </citation>
    <scope>NUCLEOTIDE SEQUENCE [GENOMIC DNA]</scope>
</reference>
<reference key="2">
    <citation type="journal article" date="2005" name="Mol. Biol. Evol.">
        <title>Analysis of Acorus calamus chloroplast genome and its phylogenetic implications.</title>
        <authorList>
            <person name="Goremykin V.V."/>
            <person name="Holland B."/>
            <person name="Hirsch-Ernst K.I."/>
            <person name="Hellwig F.H."/>
        </authorList>
    </citation>
    <scope>NUCLEOTIDE SEQUENCE [LARGE SCALE GENOMIC DNA]</scope>
</reference>
<feature type="chain" id="PRO_0000200348" description="Cytochrome b559 subunit beta">
    <location>
        <begin position="1"/>
        <end position="39"/>
    </location>
</feature>
<feature type="transmembrane region" description="Helical" evidence="1">
    <location>
        <begin position="14"/>
        <end position="30"/>
    </location>
</feature>
<feature type="binding site" description="axial binding residue" evidence="1">
    <location>
        <position position="18"/>
    </location>
    <ligand>
        <name>heme</name>
        <dbReference type="ChEBI" id="CHEBI:30413"/>
        <note>ligand shared with alpha subunit</note>
    </ligand>
    <ligandPart>
        <name>Fe</name>
        <dbReference type="ChEBI" id="CHEBI:18248"/>
    </ligandPart>
</feature>
<dbReference type="EMBL" id="AF123828">
    <property type="protein sequence ID" value="AAG26192.1"/>
    <property type="molecule type" value="Genomic_DNA"/>
</dbReference>
<dbReference type="EMBL" id="AJ879453">
    <property type="protein sequence ID" value="CAI53809.1"/>
    <property type="molecule type" value="Genomic_DNA"/>
</dbReference>
<dbReference type="RefSeq" id="YP_319780.1">
    <property type="nucleotide sequence ID" value="NC_007407.1"/>
</dbReference>
<dbReference type="SMR" id="Q7J1C5"/>
<dbReference type="GeneID" id="3677467"/>
<dbReference type="GO" id="GO:0009535">
    <property type="term" value="C:chloroplast thylakoid membrane"/>
    <property type="evidence" value="ECO:0007669"/>
    <property type="project" value="UniProtKB-SubCell"/>
</dbReference>
<dbReference type="GO" id="GO:0009539">
    <property type="term" value="C:photosystem II reaction center"/>
    <property type="evidence" value="ECO:0007669"/>
    <property type="project" value="InterPro"/>
</dbReference>
<dbReference type="GO" id="GO:0009055">
    <property type="term" value="F:electron transfer activity"/>
    <property type="evidence" value="ECO:0007669"/>
    <property type="project" value="UniProtKB-UniRule"/>
</dbReference>
<dbReference type="GO" id="GO:0020037">
    <property type="term" value="F:heme binding"/>
    <property type="evidence" value="ECO:0007669"/>
    <property type="project" value="InterPro"/>
</dbReference>
<dbReference type="GO" id="GO:0005506">
    <property type="term" value="F:iron ion binding"/>
    <property type="evidence" value="ECO:0007669"/>
    <property type="project" value="UniProtKB-UniRule"/>
</dbReference>
<dbReference type="GO" id="GO:0009767">
    <property type="term" value="P:photosynthetic electron transport chain"/>
    <property type="evidence" value="ECO:0007669"/>
    <property type="project" value="InterPro"/>
</dbReference>
<dbReference type="HAMAP" id="MF_00643">
    <property type="entry name" value="PSII_PsbF"/>
    <property type="match status" value="1"/>
</dbReference>
<dbReference type="InterPro" id="IPR006241">
    <property type="entry name" value="PSII_cyt_b559_bsu"/>
</dbReference>
<dbReference type="InterPro" id="IPR006216">
    <property type="entry name" value="PSII_cyt_b559_CS"/>
</dbReference>
<dbReference type="InterPro" id="IPR013081">
    <property type="entry name" value="PSII_cyt_b559_N"/>
</dbReference>
<dbReference type="NCBIfam" id="TIGR01333">
    <property type="entry name" value="cyt_b559_beta"/>
    <property type="match status" value="1"/>
</dbReference>
<dbReference type="Pfam" id="PF00283">
    <property type="entry name" value="Cytochrom_B559"/>
    <property type="match status" value="1"/>
</dbReference>
<dbReference type="PIRSF" id="PIRSF000037">
    <property type="entry name" value="PsbF"/>
    <property type="match status" value="1"/>
</dbReference>
<dbReference type="SUPFAM" id="SSF161045">
    <property type="entry name" value="Cytochrome b559 subunits"/>
    <property type="match status" value="1"/>
</dbReference>
<dbReference type="PROSITE" id="PS00537">
    <property type="entry name" value="CYTOCHROME_B559"/>
    <property type="match status" value="1"/>
</dbReference>
<accession>Q7J1C5</accession>
<accession>Q3V519</accession>
<keyword id="KW-0150">Chloroplast</keyword>
<keyword id="KW-0249">Electron transport</keyword>
<keyword id="KW-0349">Heme</keyword>
<keyword id="KW-0408">Iron</keyword>
<keyword id="KW-0472">Membrane</keyword>
<keyword id="KW-0479">Metal-binding</keyword>
<keyword id="KW-0602">Photosynthesis</keyword>
<keyword id="KW-0604">Photosystem II</keyword>
<keyword id="KW-0934">Plastid</keyword>
<keyword id="KW-0793">Thylakoid</keyword>
<keyword id="KW-0812">Transmembrane</keyword>
<keyword id="KW-1133">Transmembrane helix</keyword>
<keyword id="KW-0813">Transport</keyword>
<protein>
    <recommendedName>
        <fullName evidence="1">Cytochrome b559 subunit beta</fullName>
    </recommendedName>
    <alternativeName>
        <fullName evidence="1">PSII reaction center subunit VI</fullName>
    </alternativeName>
</protein>
<evidence type="ECO:0000255" key="1">
    <source>
        <dbReference type="HAMAP-Rule" id="MF_00643"/>
    </source>
</evidence>
<proteinExistence type="inferred from homology"/>
<organism>
    <name type="scientific">Acorus calamus</name>
    <name type="common">Sweet flag</name>
    <dbReference type="NCBI Taxonomy" id="4465"/>
    <lineage>
        <taxon>Eukaryota</taxon>
        <taxon>Viridiplantae</taxon>
        <taxon>Streptophyta</taxon>
        <taxon>Embryophyta</taxon>
        <taxon>Tracheophyta</taxon>
        <taxon>Spermatophyta</taxon>
        <taxon>Magnoliopsida</taxon>
        <taxon>Liliopsida</taxon>
        <taxon>Acoraceae</taxon>
        <taxon>Acorus</taxon>
    </lineage>
</organism>
<geneLocation type="chloroplast"/>